<sequence>MSEAPKKRWYVVQAFSGFEGRVATSLREHIKLHNMEDLFGEVMVPTEEVVEIRGGQRRKSERKFFPGYVLVQMVMNDASWHLVRSVPRVMGFIGGTSDRPAPISDKEVDAIMNRLQQVGDKPRPKTLFEPGEMVRVNDGPFADFNGVVEEVDYEKSRLKVSVSIFGRATPVELDFSQVEKA</sequence>
<dbReference type="EMBL" id="AE005174">
    <property type="protein sequence ID" value="AAG59178.1"/>
    <property type="molecule type" value="Genomic_DNA"/>
</dbReference>
<dbReference type="EMBL" id="BA000007">
    <property type="protein sequence ID" value="BAB38328.1"/>
    <property type="molecule type" value="Genomic_DNA"/>
</dbReference>
<dbReference type="PIR" id="A98242">
    <property type="entry name" value="A98242"/>
</dbReference>
<dbReference type="PIR" id="F86089">
    <property type="entry name" value="F86089"/>
</dbReference>
<dbReference type="RefSeq" id="NP_312932.1">
    <property type="nucleotide sequence ID" value="NC_002695.1"/>
</dbReference>
<dbReference type="RefSeq" id="WP_001287516.1">
    <property type="nucleotide sequence ID" value="NZ_VOAI01000037.1"/>
</dbReference>
<dbReference type="PDB" id="5TBZ">
    <property type="method" value="X-ray"/>
    <property type="resolution" value="7.00 A"/>
    <property type="chains" value="J/K=1-181"/>
</dbReference>
<dbReference type="PDBsum" id="5TBZ"/>
<dbReference type="BMRB" id="P0AFG1"/>
<dbReference type="EMDB" id="EMD-11418"/>
<dbReference type="EMDB" id="EMD-7351"/>
<dbReference type="SMR" id="P0AFG1"/>
<dbReference type="STRING" id="155864.Z5555"/>
<dbReference type="GeneID" id="914947"/>
<dbReference type="GeneID" id="93777912"/>
<dbReference type="KEGG" id="ece:Z5555"/>
<dbReference type="KEGG" id="ecs:ECs_4905"/>
<dbReference type="PATRIC" id="fig|386585.9.peg.5129"/>
<dbReference type="eggNOG" id="COG0250">
    <property type="taxonomic scope" value="Bacteria"/>
</dbReference>
<dbReference type="HOGENOM" id="CLU_067287_1_0_6"/>
<dbReference type="OMA" id="EWYVIHT"/>
<dbReference type="Proteomes" id="UP000000558">
    <property type="component" value="Chromosome"/>
</dbReference>
<dbReference type="Proteomes" id="UP000002519">
    <property type="component" value="Chromosome"/>
</dbReference>
<dbReference type="GO" id="GO:0005829">
    <property type="term" value="C:cytosol"/>
    <property type="evidence" value="ECO:0007669"/>
    <property type="project" value="TreeGrafter"/>
</dbReference>
<dbReference type="GO" id="GO:0006353">
    <property type="term" value="P:DNA-templated transcription termination"/>
    <property type="evidence" value="ECO:0007669"/>
    <property type="project" value="UniProtKB-UniRule"/>
</dbReference>
<dbReference type="GO" id="GO:0032784">
    <property type="term" value="P:regulation of DNA-templated transcription elongation"/>
    <property type="evidence" value="ECO:0007669"/>
    <property type="project" value="InterPro"/>
</dbReference>
<dbReference type="GO" id="GO:0031564">
    <property type="term" value="P:transcription antitermination"/>
    <property type="evidence" value="ECO:0007669"/>
    <property type="project" value="UniProtKB-UniRule"/>
</dbReference>
<dbReference type="GO" id="GO:0140673">
    <property type="term" value="P:transcription elongation-coupled chromatin remodeling"/>
    <property type="evidence" value="ECO:0007669"/>
    <property type="project" value="InterPro"/>
</dbReference>
<dbReference type="CDD" id="cd06091">
    <property type="entry name" value="KOW_NusG"/>
    <property type="match status" value="1"/>
</dbReference>
<dbReference type="CDD" id="cd09891">
    <property type="entry name" value="NGN_Bact_1"/>
    <property type="match status" value="1"/>
</dbReference>
<dbReference type="FunFam" id="2.30.30.30:FF:000002">
    <property type="entry name" value="Transcription termination/antitermination factor NusG"/>
    <property type="match status" value="1"/>
</dbReference>
<dbReference type="FunFam" id="3.30.70.940:FF:000001">
    <property type="entry name" value="Transcription termination/antitermination protein NusG"/>
    <property type="match status" value="1"/>
</dbReference>
<dbReference type="Gene3D" id="2.30.30.30">
    <property type="match status" value="1"/>
</dbReference>
<dbReference type="Gene3D" id="3.30.70.940">
    <property type="entry name" value="NusG, N-terminal domain"/>
    <property type="match status" value="1"/>
</dbReference>
<dbReference type="HAMAP" id="MF_00948">
    <property type="entry name" value="NusG"/>
    <property type="match status" value="1"/>
</dbReference>
<dbReference type="InterPro" id="IPR005824">
    <property type="entry name" value="KOW"/>
</dbReference>
<dbReference type="InterPro" id="IPR047050">
    <property type="entry name" value="NGN"/>
</dbReference>
<dbReference type="InterPro" id="IPR006645">
    <property type="entry name" value="NGN-like_dom"/>
</dbReference>
<dbReference type="InterPro" id="IPR036735">
    <property type="entry name" value="NGN_dom_sf"/>
</dbReference>
<dbReference type="InterPro" id="IPR043425">
    <property type="entry name" value="NusG-like"/>
</dbReference>
<dbReference type="InterPro" id="IPR014722">
    <property type="entry name" value="Rib_uL2_dom2"/>
</dbReference>
<dbReference type="InterPro" id="IPR001062">
    <property type="entry name" value="Transcrpt_antiterm_NusG"/>
</dbReference>
<dbReference type="InterPro" id="IPR015869">
    <property type="entry name" value="Transcrpt_antiterm_NusG_bac_CS"/>
</dbReference>
<dbReference type="InterPro" id="IPR008991">
    <property type="entry name" value="Translation_prot_SH3-like_sf"/>
</dbReference>
<dbReference type="NCBIfam" id="TIGR00922">
    <property type="entry name" value="nusG"/>
    <property type="match status" value="1"/>
</dbReference>
<dbReference type="PANTHER" id="PTHR30265">
    <property type="entry name" value="RHO-INTERACTING TRANSCRIPTION TERMINATION FACTOR NUSG"/>
    <property type="match status" value="1"/>
</dbReference>
<dbReference type="PANTHER" id="PTHR30265:SF2">
    <property type="entry name" value="TRANSCRIPTION TERMINATION_ANTITERMINATION PROTEIN NUSG"/>
    <property type="match status" value="1"/>
</dbReference>
<dbReference type="Pfam" id="PF00467">
    <property type="entry name" value="KOW"/>
    <property type="match status" value="1"/>
</dbReference>
<dbReference type="Pfam" id="PF02357">
    <property type="entry name" value="NusG"/>
    <property type="match status" value="1"/>
</dbReference>
<dbReference type="PRINTS" id="PR00338">
    <property type="entry name" value="NUSGTNSCPFCT"/>
</dbReference>
<dbReference type="SMART" id="SM00739">
    <property type="entry name" value="KOW"/>
    <property type="match status" value="1"/>
</dbReference>
<dbReference type="SMART" id="SM00738">
    <property type="entry name" value="NGN"/>
    <property type="match status" value="1"/>
</dbReference>
<dbReference type="SUPFAM" id="SSF82679">
    <property type="entry name" value="N-utilization substance G protein NusG, N-terminal domain"/>
    <property type="match status" value="1"/>
</dbReference>
<dbReference type="SUPFAM" id="SSF50104">
    <property type="entry name" value="Translation proteins SH3-like domain"/>
    <property type="match status" value="1"/>
</dbReference>
<dbReference type="PROSITE" id="PS01014">
    <property type="entry name" value="NUSG"/>
    <property type="match status" value="1"/>
</dbReference>
<accession>P0AFG1</accession>
<accession>P16921</accession>
<feature type="initiator methionine" description="Removed" evidence="1">
    <location>
        <position position="1"/>
    </location>
</feature>
<feature type="chain" id="PRO_0000113927" description="Transcription termination/antitermination protein NusG">
    <location>
        <begin position="2"/>
        <end position="181"/>
    </location>
</feature>
<feature type="domain" description="KOW" evidence="2">
    <location>
        <begin position="130"/>
        <end position="161"/>
    </location>
</feature>
<protein>
    <recommendedName>
        <fullName evidence="2">Transcription termination/antitermination protein NusG</fullName>
    </recommendedName>
</protein>
<evidence type="ECO:0000250" key="1"/>
<evidence type="ECO:0000255" key="2">
    <source>
        <dbReference type="HAMAP-Rule" id="MF_00948"/>
    </source>
</evidence>
<comment type="function">
    <text evidence="2">Participates in transcription elongation, termination and antitermination. In the absence of Rho, increases the rate of transcription elongation by the RNA polymerase (RNAP), probably by partially suppressing pausing. In the presence of Rho, modulates most Rho-dependent termination events by interacting with the RNAP to render the complex more susceptible to the termination activity of Rho. May be required to overcome a kinetic limitation of Rho to function at certain terminators. Also involved in ribosomal RNA transcriptional antitermination.</text>
</comment>
<comment type="subunit">
    <text evidence="2">Monomer. Interacts with the transcription termination factor Rho and with RNA polymerase.</text>
</comment>
<comment type="similarity">
    <text evidence="2">Belongs to the NusG family.</text>
</comment>
<keyword id="KW-0002">3D-structure</keyword>
<keyword id="KW-1185">Reference proteome</keyword>
<keyword id="KW-0804">Transcription</keyword>
<keyword id="KW-0889">Transcription antitermination</keyword>
<keyword id="KW-0805">Transcription regulation</keyword>
<keyword id="KW-0806">Transcription termination</keyword>
<name>NUSG_ECO57</name>
<organism>
    <name type="scientific">Escherichia coli O157:H7</name>
    <dbReference type="NCBI Taxonomy" id="83334"/>
    <lineage>
        <taxon>Bacteria</taxon>
        <taxon>Pseudomonadati</taxon>
        <taxon>Pseudomonadota</taxon>
        <taxon>Gammaproteobacteria</taxon>
        <taxon>Enterobacterales</taxon>
        <taxon>Enterobacteriaceae</taxon>
        <taxon>Escherichia</taxon>
    </lineage>
</organism>
<gene>
    <name evidence="2" type="primary">nusG</name>
    <name type="ordered locus">Z5555</name>
    <name type="ordered locus">ECs4905</name>
</gene>
<reference key="1">
    <citation type="journal article" date="2001" name="Nature">
        <title>Genome sequence of enterohaemorrhagic Escherichia coli O157:H7.</title>
        <authorList>
            <person name="Perna N.T."/>
            <person name="Plunkett G. III"/>
            <person name="Burland V."/>
            <person name="Mau B."/>
            <person name="Glasner J.D."/>
            <person name="Rose D.J."/>
            <person name="Mayhew G.F."/>
            <person name="Evans P.S."/>
            <person name="Gregor J."/>
            <person name="Kirkpatrick H.A."/>
            <person name="Posfai G."/>
            <person name="Hackett J."/>
            <person name="Klink S."/>
            <person name="Boutin A."/>
            <person name="Shao Y."/>
            <person name="Miller L."/>
            <person name="Grotbeck E.J."/>
            <person name="Davis N.W."/>
            <person name="Lim A."/>
            <person name="Dimalanta E.T."/>
            <person name="Potamousis K."/>
            <person name="Apodaca J."/>
            <person name="Anantharaman T.S."/>
            <person name="Lin J."/>
            <person name="Yen G."/>
            <person name="Schwartz D.C."/>
            <person name="Welch R.A."/>
            <person name="Blattner F.R."/>
        </authorList>
    </citation>
    <scope>NUCLEOTIDE SEQUENCE [LARGE SCALE GENOMIC DNA]</scope>
    <source>
        <strain>O157:H7 / EDL933 / ATCC 700927 / EHEC</strain>
    </source>
</reference>
<reference key="2">
    <citation type="journal article" date="2001" name="DNA Res.">
        <title>Complete genome sequence of enterohemorrhagic Escherichia coli O157:H7 and genomic comparison with a laboratory strain K-12.</title>
        <authorList>
            <person name="Hayashi T."/>
            <person name="Makino K."/>
            <person name="Ohnishi M."/>
            <person name="Kurokawa K."/>
            <person name="Ishii K."/>
            <person name="Yokoyama K."/>
            <person name="Han C.-G."/>
            <person name="Ohtsubo E."/>
            <person name="Nakayama K."/>
            <person name="Murata T."/>
            <person name="Tanaka M."/>
            <person name="Tobe T."/>
            <person name="Iida T."/>
            <person name="Takami H."/>
            <person name="Honda T."/>
            <person name="Sasakawa C."/>
            <person name="Ogasawara N."/>
            <person name="Yasunaga T."/>
            <person name="Kuhara S."/>
            <person name="Shiba T."/>
            <person name="Hattori M."/>
            <person name="Shinagawa H."/>
        </authorList>
    </citation>
    <scope>NUCLEOTIDE SEQUENCE [LARGE SCALE GENOMIC DNA]</scope>
    <source>
        <strain>O157:H7 / Sakai / RIMD 0509952 / EHEC</strain>
    </source>
</reference>
<proteinExistence type="evidence at protein level"/>